<comment type="function">
    <text evidence="1">Carrier of the growing fatty acid chain in fatty acid biosynthesis.</text>
</comment>
<comment type="pathway">
    <text evidence="1">Lipid metabolism; fatty acid biosynthesis.</text>
</comment>
<comment type="subcellular location">
    <subcellularLocation>
        <location evidence="1">Cytoplasm</location>
    </subcellularLocation>
</comment>
<comment type="PTM">
    <text evidence="1">4'-phosphopantetheine is transferred from CoA to a specific serine of apo-ACP by AcpS. This modification is essential for activity because fatty acids are bound in thioester linkage to the sulfhydryl of the prosthetic group.</text>
</comment>
<comment type="similarity">
    <text evidence="1">Belongs to the acyl carrier protein (ACP) family.</text>
</comment>
<sequence length="78" mass="8640">MSTIEERVKKIIGEQLGVKQEEVTNNASFVEDLGADSLDTVELVMALEEEFDTEIPDEEAEKITTVQAAIDYINGHQA</sequence>
<name>ACP_ECO45</name>
<reference key="1">
    <citation type="journal article" date="2009" name="PLoS Genet.">
        <title>Organised genome dynamics in the Escherichia coli species results in highly diverse adaptive paths.</title>
        <authorList>
            <person name="Touchon M."/>
            <person name="Hoede C."/>
            <person name="Tenaillon O."/>
            <person name="Barbe V."/>
            <person name="Baeriswyl S."/>
            <person name="Bidet P."/>
            <person name="Bingen E."/>
            <person name="Bonacorsi S."/>
            <person name="Bouchier C."/>
            <person name="Bouvet O."/>
            <person name="Calteau A."/>
            <person name="Chiapello H."/>
            <person name="Clermont O."/>
            <person name="Cruveiller S."/>
            <person name="Danchin A."/>
            <person name="Diard M."/>
            <person name="Dossat C."/>
            <person name="Karoui M.E."/>
            <person name="Frapy E."/>
            <person name="Garry L."/>
            <person name="Ghigo J.M."/>
            <person name="Gilles A.M."/>
            <person name="Johnson J."/>
            <person name="Le Bouguenec C."/>
            <person name="Lescat M."/>
            <person name="Mangenot S."/>
            <person name="Martinez-Jehanne V."/>
            <person name="Matic I."/>
            <person name="Nassif X."/>
            <person name="Oztas S."/>
            <person name="Petit M.A."/>
            <person name="Pichon C."/>
            <person name="Rouy Z."/>
            <person name="Ruf C.S."/>
            <person name="Schneider D."/>
            <person name="Tourret J."/>
            <person name="Vacherie B."/>
            <person name="Vallenet D."/>
            <person name="Medigue C."/>
            <person name="Rocha E.P.C."/>
            <person name="Denamur E."/>
        </authorList>
    </citation>
    <scope>NUCLEOTIDE SEQUENCE [LARGE SCALE GENOMIC DNA]</scope>
    <source>
        <strain>S88 / ExPEC</strain>
    </source>
</reference>
<evidence type="ECO:0000255" key="1">
    <source>
        <dbReference type="HAMAP-Rule" id="MF_01217"/>
    </source>
</evidence>
<evidence type="ECO:0000255" key="2">
    <source>
        <dbReference type="PROSITE-ProRule" id="PRU00258"/>
    </source>
</evidence>
<protein>
    <recommendedName>
        <fullName evidence="1">Acyl carrier protein</fullName>
        <shortName evidence="1">ACP</shortName>
    </recommendedName>
</protein>
<dbReference type="EMBL" id="CU928161">
    <property type="protein sequence ID" value="CAR02434.1"/>
    <property type="molecule type" value="Genomic_DNA"/>
</dbReference>
<dbReference type="RefSeq" id="WP_000103754.1">
    <property type="nucleotide sequence ID" value="NC_011742.1"/>
</dbReference>
<dbReference type="SMR" id="B7MJ81"/>
<dbReference type="GeneID" id="98387866"/>
<dbReference type="KEGG" id="ecz:ECS88_1108"/>
<dbReference type="HOGENOM" id="CLU_108696_5_1_6"/>
<dbReference type="UniPathway" id="UPA00094"/>
<dbReference type="Proteomes" id="UP000000747">
    <property type="component" value="Chromosome"/>
</dbReference>
<dbReference type="GO" id="GO:0005829">
    <property type="term" value="C:cytosol"/>
    <property type="evidence" value="ECO:0007669"/>
    <property type="project" value="TreeGrafter"/>
</dbReference>
<dbReference type="GO" id="GO:0016020">
    <property type="term" value="C:membrane"/>
    <property type="evidence" value="ECO:0007669"/>
    <property type="project" value="GOC"/>
</dbReference>
<dbReference type="GO" id="GO:0000035">
    <property type="term" value="F:acyl binding"/>
    <property type="evidence" value="ECO:0007669"/>
    <property type="project" value="TreeGrafter"/>
</dbReference>
<dbReference type="GO" id="GO:0000036">
    <property type="term" value="F:acyl carrier activity"/>
    <property type="evidence" value="ECO:0007669"/>
    <property type="project" value="UniProtKB-UniRule"/>
</dbReference>
<dbReference type="GO" id="GO:0009245">
    <property type="term" value="P:lipid A biosynthetic process"/>
    <property type="evidence" value="ECO:0007669"/>
    <property type="project" value="TreeGrafter"/>
</dbReference>
<dbReference type="FunFam" id="1.10.1200.10:FF:000001">
    <property type="entry name" value="Acyl carrier protein"/>
    <property type="match status" value="1"/>
</dbReference>
<dbReference type="Gene3D" id="1.10.1200.10">
    <property type="entry name" value="ACP-like"/>
    <property type="match status" value="1"/>
</dbReference>
<dbReference type="HAMAP" id="MF_01217">
    <property type="entry name" value="Acyl_carrier"/>
    <property type="match status" value="1"/>
</dbReference>
<dbReference type="InterPro" id="IPR003231">
    <property type="entry name" value="ACP"/>
</dbReference>
<dbReference type="InterPro" id="IPR036736">
    <property type="entry name" value="ACP-like_sf"/>
</dbReference>
<dbReference type="InterPro" id="IPR009081">
    <property type="entry name" value="PP-bd_ACP"/>
</dbReference>
<dbReference type="InterPro" id="IPR006162">
    <property type="entry name" value="Ppantetheine_attach_site"/>
</dbReference>
<dbReference type="NCBIfam" id="TIGR00517">
    <property type="entry name" value="acyl_carrier"/>
    <property type="match status" value="1"/>
</dbReference>
<dbReference type="NCBIfam" id="NF002148">
    <property type="entry name" value="PRK00982.1-2"/>
    <property type="match status" value="1"/>
</dbReference>
<dbReference type="NCBIfam" id="NF002149">
    <property type="entry name" value="PRK00982.1-3"/>
    <property type="match status" value="1"/>
</dbReference>
<dbReference type="NCBIfam" id="NF002150">
    <property type="entry name" value="PRK00982.1-4"/>
    <property type="match status" value="1"/>
</dbReference>
<dbReference type="NCBIfam" id="NF002151">
    <property type="entry name" value="PRK00982.1-5"/>
    <property type="match status" value="1"/>
</dbReference>
<dbReference type="PANTHER" id="PTHR20863">
    <property type="entry name" value="ACYL CARRIER PROTEIN"/>
    <property type="match status" value="1"/>
</dbReference>
<dbReference type="PANTHER" id="PTHR20863:SF76">
    <property type="entry name" value="CARRIER DOMAIN-CONTAINING PROTEIN"/>
    <property type="match status" value="1"/>
</dbReference>
<dbReference type="Pfam" id="PF00550">
    <property type="entry name" value="PP-binding"/>
    <property type="match status" value="1"/>
</dbReference>
<dbReference type="SUPFAM" id="SSF47336">
    <property type="entry name" value="ACP-like"/>
    <property type="match status" value="1"/>
</dbReference>
<dbReference type="PROSITE" id="PS50075">
    <property type="entry name" value="CARRIER"/>
    <property type="match status" value="1"/>
</dbReference>
<dbReference type="PROSITE" id="PS00012">
    <property type="entry name" value="PHOSPHOPANTETHEINE"/>
    <property type="match status" value="1"/>
</dbReference>
<gene>
    <name evidence="1" type="primary">acpP</name>
    <name type="ordered locus">ECS88_1108</name>
</gene>
<organism>
    <name type="scientific">Escherichia coli O45:K1 (strain S88 / ExPEC)</name>
    <dbReference type="NCBI Taxonomy" id="585035"/>
    <lineage>
        <taxon>Bacteria</taxon>
        <taxon>Pseudomonadati</taxon>
        <taxon>Pseudomonadota</taxon>
        <taxon>Gammaproteobacteria</taxon>
        <taxon>Enterobacterales</taxon>
        <taxon>Enterobacteriaceae</taxon>
        <taxon>Escherichia</taxon>
    </lineage>
</organism>
<feature type="chain" id="PRO_1000139021" description="Acyl carrier protein">
    <location>
        <begin position="1"/>
        <end position="78"/>
    </location>
</feature>
<feature type="domain" description="Carrier" evidence="2">
    <location>
        <begin position="2"/>
        <end position="77"/>
    </location>
</feature>
<feature type="modified residue" description="O-(pantetheine 4'-phosphoryl)serine" evidence="2">
    <location>
        <position position="37"/>
    </location>
</feature>
<keyword id="KW-0963">Cytoplasm</keyword>
<keyword id="KW-0275">Fatty acid biosynthesis</keyword>
<keyword id="KW-0276">Fatty acid metabolism</keyword>
<keyword id="KW-0444">Lipid biosynthesis</keyword>
<keyword id="KW-0443">Lipid metabolism</keyword>
<keyword id="KW-0596">Phosphopantetheine</keyword>
<keyword id="KW-0597">Phosphoprotein</keyword>
<keyword id="KW-1185">Reference proteome</keyword>
<proteinExistence type="inferred from homology"/>
<accession>B7MJ81</accession>